<reference key="1">
    <citation type="journal article" date="2008" name="J. Bacteriol.">
        <title>Complete genome sequence of uropathogenic Proteus mirabilis, a master of both adherence and motility.</title>
        <authorList>
            <person name="Pearson M.M."/>
            <person name="Sebaihia M."/>
            <person name="Churcher C."/>
            <person name="Quail M.A."/>
            <person name="Seshasayee A.S."/>
            <person name="Luscombe N.M."/>
            <person name="Abdellah Z."/>
            <person name="Arrosmith C."/>
            <person name="Atkin B."/>
            <person name="Chillingworth T."/>
            <person name="Hauser H."/>
            <person name="Jagels K."/>
            <person name="Moule S."/>
            <person name="Mungall K."/>
            <person name="Norbertczak H."/>
            <person name="Rabbinowitsch E."/>
            <person name="Walker D."/>
            <person name="Whithead S."/>
            <person name="Thomson N.R."/>
            <person name="Rather P.N."/>
            <person name="Parkhill J."/>
            <person name="Mobley H.L.T."/>
        </authorList>
    </citation>
    <scope>NUCLEOTIDE SEQUENCE [LARGE SCALE GENOMIC DNA]</scope>
    <source>
        <strain>HI4320</strain>
    </source>
</reference>
<feature type="chain" id="PRO_0000414821" description="23S rRNA (uracil(747)-C(5))-methyltransferase RlmC">
    <location>
        <begin position="1"/>
        <end position="377"/>
    </location>
</feature>
<feature type="active site" description="Nucleophile" evidence="1">
    <location>
        <position position="334"/>
    </location>
</feature>
<feature type="binding site" evidence="1">
    <location>
        <position position="3"/>
    </location>
    <ligand>
        <name>[4Fe-4S] cluster</name>
        <dbReference type="ChEBI" id="CHEBI:49883"/>
    </ligand>
</feature>
<feature type="binding site" evidence="1">
    <location>
        <position position="11"/>
    </location>
    <ligand>
        <name>[4Fe-4S] cluster</name>
        <dbReference type="ChEBI" id="CHEBI:49883"/>
    </ligand>
</feature>
<feature type="binding site" evidence="1">
    <location>
        <position position="14"/>
    </location>
    <ligand>
        <name>[4Fe-4S] cluster</name>
        <dbReference type="ChEBI" id="CHEBI:49883"/>
    </ligand>
</feature>
<feature type="binding site" evidence="1">
    <location>
        <position position="87"/>
    </location>
    <ligand>
        <name>[4Fe-4S] cluster</name>
        <dbReference type="ChEBI" id="CHEBI:49883"/>
    </ligand>
</feature>
<feature type="binding site" evidence="1">
    <location>
        <position position="212"/>
    </location>
    <ligand>
        <name>S-adenosyl-L-methionine</name>
        <dbReference type="ChEBI" id="CHEBI:59789"/>
    </ligand>
</feature>
<feature type="binding site" evidence="1">
    <location>
        <position position="241"/>
    </location>
    <ligand>
        <name>S-adenosyl-L-methionine</name>
        <dbReference type="ChEBI" id="CHEBI:59789"/>
    </ligand>
</feature>
<feature type="binding site" evidence="1">
    <location>
        <position position="262"/>
    </location>
    <ligand>
        <name>S-adenosyl-L-methionine</name>
        <dbReference type="ChEBI" id="CHEBI:59789"/>
    </ligand>
</feature>
<feature type="binding site" evidence="1">
    <location>
        <position position="307"/>
    </location>
    <ligand>
        <name>S-adenosyl-L-methionine</name>
        <dbReference type="ChEBI" id="CHEBI:59789"/>
    </ligand>
</feature>
<accession>B4ET17</accession>
<dbReference type="EC" id="2.1.1.189" evidence="1"/>
<dbReference type="EMBL" id="AM942759">
    <property type="protein sequence ID" value="CAR41582.1"/>
    <property type="molecule type" value="Genomic_DNA"/>
</dbReference>
<dbReference type="RefSeq" id="WP_012367696.1">
    <property type="nucleotide sequence ID" value="NC_010554.1"/>
</dbReference>
<dbReference type="SMR" id="B4ET17"/>
<dbReference type="EnsemblBacteria" id="CAR41582">
    <property type="protein sequence ID" value="CAR41582"/>
    <property type="gene ID" value="PMI0678"/>
</dbReference>
<dbReference type="GeneID" id="6800510"/>
<dbReference type="KEGG" id="pmr:PMI0678"/>
<dbReference type="eggNOG" id="COG2265">
    <property type="taxonomic scope" value="Bacteria"/>
</dbReference>
<dbReference type="HOGENOM" id="CLU_014689_0_0_6"/>
<dbReference type="Proteomes" id="UP000008319">
    <property type="component" value="Chromosome"/>
</dbReference>
<dbReference type="GO" id="GO:0051539">
    <property type="term" value="F:4 iron, 4 sulfur cluster binding"/>
    <property type="evidence" value="ECO:0007669"/>
    <property type="project" value="UniProtKB-KW"/>
</dbReference>
<dbReference type="GO" id="GO:0005506">
    <property type="term" value="F:iron ion binding"/>
    <property type="evidence" value="ECO:0007669"/>
    <property type="project" value="UniProtKB-UniRule"/>
</dbReference>
<dbReference type="GO" id="GO:0070041">
    <property type="term" value="F:rRNA (uridine-C5-)-methyltransferase activity"/>
    <property type="evidence" value="ECO:0007669"/>
    <property type="project" value="UniProtKB-UniRule"/>
</dbReference>
<dbReference type="GO" id="GO:0070475">
    <property type="term" value="P:rRNA base methylation"/>
    <property type="evidence" value="ECO:0007669"/>
    <property type="project" value="TreeGrafter"/>
</dbReference>
<dbReference type="CDD" id="cd02440">
    <property type="entry name" value="AdoMet_MTases"/>
    <property type="match status" value="1"/>
</dbReference>
<dbReference type="FunFam" id="2.40.50.1070:FF:000002">
    <property type="entry name" value="23S rRNA (uracil(747)-C(5))-methyltransferase RlmC"/>
    <property type="match status" value="1"/>
</dbReference>
<dbReference type="Gene3D" id="2.40.50.1070">
    <property type="match status" value="1"/>
</dbReference>
<dbReference type="Gene3D" id="3.40.50.150">
    <property type="entry name" value="Vaccinia Virus protein VP39"/>
    <property type="match status" value="1"/>
</dbReference>
<dbReference type="HAMAP" id="MF_01012">
    <property type="entry name" value="23SrRNA_methyltr_RlmC"/>
    <property type="match status" value="1"/>
</dbReference>
<dbReference type="InterPro" id="IPR011825">
    <property type="entry name" value="23SrRNA_MeTrfase_RlmC"/>
</dbReference>
<dbReference type="InterPro" id="IPR030390">
    <property type="entry name" value="MeTrfase_TrmA_AS"/>
</dbReference>
<dbReference type="InterPro" id="IPR030391">
    <property type="entry name" value="MeTrfase_TrmA_CS"/>
</dbReference>
<dbReference type="InterPro" id="IPR029063">
    <property type="entry name" value="SAM-dependent_MTases_sf"/>
</dbReference>
<dbReference type="InterPro" id="IPR010280">
    <property type="entry name" value="U5_MeTrfase_fam"/>
</dbReference>
<dbReference type="NCBIfam" id="TIGR02085">
    <property type="entry name" value="meth_trns_rumB"/>
    <property type="match status" value="1"/>
</dbReference>
<dbReference type="NCBIfam" id="TIGR00479">
    <property type="entry name" value="rumA"/>
    <property type="match status" value="1"/>
</dbReference>
<dbReference type="PANTHER" id="PTHR11061">
    <property type="entry name" value="RNA M5U METHYLTRANSFERASE"/>
    <property type="match status" value="1"/>
</dbReference>
<dbReference type="PANTHER" id="PTHR11061:SF30">
    <property type="entry name" value="TRNA (URACIL(54)-C(5))-METHYLTRANSFERASE"/>
    <property type="match status" value="1"/>
</dbReference>
<dbReference type="Pfam" id="PF05958">
    <property type="entry name" value="tRNA_U5-meth_tr"/>
    <property type="match status" value="1"/>
</dbReference>
<dbReference type="SUPFAM" id="SSF53335">
    <property type="entry name" value="S-adenosyl-L-methionine-dependent methyltransferases"/>
    <property type="match status" value="1"/>
</dbReference>
<dbReference type="PROSITE" id="PS51687">
    <property type="entry name" value="SAM_MT_RNA_M5U"/>
    <property type="match status" value="1"/>
</dbReference>
<dbReference type="PROSITE" id="PS01230">
    <property type="entry name" value="TRMA_1"/>
    <property type="match status" value="1"/>
</dbReference>
<dbReference type="PROSITE" id="PS01231">
    <property type="entry name" value="TRMA_2"/>
    <property type="match status" value="1"/>
</dbReference>
<comment type="function">
    <text evidence="1">Catalyzes the formation of 5-methyl-uridine at position 747 (m5U747) in 23S rRNA.</text>
</comment>
<comment type="catalytic activity">
    <reaction evidence="1">
        <text>uridine(747) in 23S rRNA + S-adenosyl-L-methionine = 5-methyluridine(747) in 23S rRNA + S-adenosyl-L-homocysteine + H(+)</text>
        <dbReference type="Rhea" id="RHEA:42628"/>
        <dbReference type="Rhea" id="RHEA-COMP:10154"/>
        <dbReference type="Rhea" id="RHEA-COMP:10155"/>
        <dbReference type="ChEBI" id="CHEBI:15378"/>
        <dbReference type="ChEBI" id="CHEBI:57856"/>
        <dbReference type="ChEBI" id="CHEBI:59789"/>
        <dbReference type="ChEBI" id="CHEBI:65315"/>
        <dbReference type="ChEBI" id="CHEBI:74447"/>
        <dbReference type="EC" id="2.1.1.189"/>
    </reaction>
</comment>
<comment type="similarity">
    <text evidence="1">Belongs to the class I-like SAM-binding methyltransferase superfamily. RNA M5U methyltransferase family. RlmC subfamily.</text>
</comment>
<gene>
    <name evidence="1" type="primary">rlmC</name>
    <name type="synonym">rumB</name>
    <name type="ordered locus">PMI0678</name>
</gene>
<name>RLMC_PROMH</name>
<proteinExistence type="inferred from homology"/>
<sequence length="377" mass="42577">MQCARSSAGDCHSCGWLSLAYSEQINQKQHNLLDLLPKNYAFTQLAPVESQQVKFRNKAKMVVSGSVEKPILGLRKPEGEGVDLCQCPLYPASFEPVFPILKTFIAKAGLVPYNVERRRGELKFILLTESRHNHSMMLRFVLRSEKKLAQLRQALPWLQAQLPQLAVISVNIQPVHMAILEGEQEIVLTEKTFLDEYFNEIPLHIRPKGFFQTNPDVAASLYATAGHWVKELQINRLWDLFCGSGGFGLHCAQKNTELTGIEISPEAIECARLSANELGLEHVEFQALDSTGFALAKESVPELVLVNPPRRGIGETLCDYLNSMKPRFILYSSCNAQTMAKDIQQLSHYRIDRVQLFDMFPHTAHYEVLTLLVLQQS</sequence>
<keyword id="KW-0004">4Fe-4S</keyword>
<keyword id="KW-0408">Iron</keyword>
<keyword id="KW-0411">Iron-sulfur</keyword>
<keyword id="KW-0479">Metal-binding</keyword>
<keyword id="KW-0489">Methyltransferase</keyword>
<keyword id="KW-1185">Reference proteome</keyword>
<keyword id="KW-0698">rRNA processing</keyword>
<keyword id="KW-0949">S-adenosyl-L-methionine</keyword>
<keyword id="KW-0808">Transferase</keyword>
<evidence type="ECO:0000255" key="1">
    <source>
        <dbReference type="HAMAP-Rule" id="MF_01012"/>
    </source>
</evidence>
<protein>
    <recommendedName>
        <fullName evidence="1">23S rRNA (uracil(747)-C(5))-methyltransferase RlmC</fullName>
        <ecNumber evidence="1">2.1.1.189</ecNumber>
    </recommendedName>
    <alternativeName>
        <fullName evidence="1">23S rRNA(m5U747)-methyltransferase</fullName>
    </alternativeName>
</protein>
<organism>
    <name type="scientific">Proteus mirabilis (strain HI4320)</name>
    <dbReference type="NCBI Taxonomy" id="529507"/>
    <lineage>
        <taxon>Bacteria</taxon>
        <taxon>Pseudomonadati</taxon>
        <taxon>Pseudomonadota</taxon>
        <taxon>Gammaproteobacteria</taxon>
        <taxon>Enterobacterales</taxon>
        <taxon>Morganellaceae</taxon>
        <taxon>Proteus</taxon>
    </lineage>
</organism>